<keyword id="KW-0067">ATP-binding</keyword>
<keyword id="KW-0436">Ligase</keyword>
<keyword id="KW-0547">Nucleotide-binding</keyword>
<keyword id="KW-0658">Purine biosynthesis</keyword>
<sequence length="234" mass="26968">MEKKDMLYEGKAKKIFRTDDKDTVVVYYKDDATAFNGEKKGTIEDKGVMNNSITAMLFELLEKKGVKTHFIEKINEREQLCKKVEIVPLEVIVRNIAAGSMAKRLGLSEGRKLDTTVFEISYKNDDLNDPLINDYHAVAIGLTTFEELKEMYSIAEKVNNTLKEFFDEQGINLVDFKIEIGRFNGELLLADEISPDTCRLWDKSTGEKLDKDRFRRDMGNVKEAYMEILKRVNK</sequence>
<dbReference type="EC" id="6.3.2.6" evidence="1"/>
<dbReference type="EMBL" id="CP001581">
    <property type="protein sequence ID" value="ACO83922.1"/>
    <property type="molecule type" value="Genomic_DNA"/>
</dbReference>
<dbReference type="RefSeq" id="WP_012047943.1">
    <property type="nucleotide sequence ID" value="NC_012563.1"/>
</dbReference>
<dbReference type="SMR" id="C1FV80"/>
<dbReference type="GeneID" id="5185071"/>
<dbReference type="KEGG" id="cby:CLM_3274"/>
<dbReference type="eggNOG" id="COG0152">
    <property type="taxonomic scope" value="Bacteria"/>
</dbReference>
<dbReference type="HOGENOM" id="CLU_061495_2_0_9"/>
<dbReference type="UniPathway" id="UPA00074">
    <property type="reaction ID" value="UER00131"/>
</dbReference>
<dbReference type="Proteomes" id="UP000001374">
    <property type="component" value="Chromosome"/>
</dbReference>
<dbReference type="GO" id="GO:0005524">
    <property type="term" value="F:ATP binding"/>
    <property type="evidence" value="ECO:0007669"/>
    <property type="project" value="UniProtKB-KW"/>
</dbReference>
<dbReference type="GO" id="GO:0004639">
    <property type="term" value="F:phosphoribosylaminoimidazolesuccinocarboxamide synthase activity"/>
    <property type="evidence" value="ECO:0007669"/>
    <property type="project" value="UniProtKB-UniRule"/>
</dbReference>
<dbReference type="GO" id="GO:0006189">
    <property type="term" value="P:'de novo' IMP biosynthetic process"/>
    <property type="evidence" value="ECO:0007669"/>
    <property type="project" value="UniProtKB-UniRule"/>
</dbReference>
<dbReference type="GO" id="GO:0009236">
    <property type="term" value="P:cobalamin biosynthetic process"/>
    <property type="evidence" value="ECO:0007669"/>
    <property type="project" value="InterPro"/>
</dbReference>
<dbReference type="CDD" id="cd01415">
    <property type="entry name" value="SAICAR_synt_PurC"/>
    <property type="match status" value="1"/>
</dbReference>
<dbReference type="FunFam" id="3.30.200.20:FF:000189">
    <property type="entry name" value="Phosphoribosylaminoimidazole-succinocarboxamide synthase"/>
    <property type="match status" value="1"/>
</dbReference>
<dbReference type="FunFam" id="3.30.470.20:FF:000006">
    <property type="entry name" value="Phosphoribosylaminoimidazole-succinocarboxamide synthase"/>
    <property type="match status" value="1"/>
</dbReference>
<dbReference type="Gene3D" id="3.30.470.20">
    <property type="entry name" value="ATP-grasp fold, B domain"/>
    <property type="match status" value="1"/>
</dbReference>
<dbReference type="Gene3D" id="3.30.200.20">
    <property type="entry name" value="Phosphorylase Kinase, domain 1"/>
    <property type="match status" value="1"/>
</dbReference>
<dbReference type="HAMAP" id="MF_00137">
    <property type="entry name" value="SAICAR_synth"/>
    <property type="match status" value="1"/>
</dbReference>
<dbReference type="InterPro" id="IPR028923">
    <property type="entry name" value="SAICAR_synt/ADE2_N"/>
</dbReference>
<dbReference type="InterPro" id="IPR033934">
    <property type="entry name" value="SAICAR_synt_PurC"/>
</dbReference>
<dbReference type="InterPro" id="IPR001636">
    <property type="entry name" value="SAICAR_synth"/>
</dbReference>
<dbReference type="InterPro" id="IPR050089">
    <property type="entry name" value="SAICAR_synthetase"/>
</dbReference>
<dbReference type="InterPro" id="IPR018236">
    <property type="entry name" value="SAICAR_synthetase_CS"/>
</dbReference>
<dbReference type="NCBIfam" id="TIGR00081">
    <property type="entry name" value="purC"/>
    <property type="match status" value="1"/>
</dbReference>
<dbReference type="PANTHER" id="PTHR43599">
    <property type="entry name" value="MULTIFUNCTIONAL PROTEIN ADE2"/>
    <property type="match status" value="1"/>
</dbReference>
<dbReference type="PANTHER" id="PTHR43599:SF3">
    <property type="entry name" value="SI:DKEY-6E2.2"/>
    <property type="match status" value="1"/>
</dbReference>
<dbReference type="Pfam" id="PF01259">
    <property type="entry name" value="SAICAR_synt"/>
    <property type="match status" value="1"/>
</dbReference>
<dbReference type="SUPFAM" id="SSF56104">
    <property type="entry name" value="SAICAR synthase-like"/>
    <property type="match status" value="1"/>
</dbReference>
<dbReference type="PROSITE" id="PS01057">
    <property type="entry name" value="SAICAR_SYNTHETASE_1"/>
    <property type="match status" value="1"/>
</dbReference>
<dbReference type="PROSITE" id="PS01058">
    <property type="entry name" value="SAICAR_SYNTHETASE_2"/>
    <property type="match status" value="1"/>
</dbReference>
<proteinExistence type="inferred from homology"/>
<comment type="catalytic activity">
    <reaction evidence="1">
        <text>5-amino-1-(5-phospho-D-ribosyl)imidazole-4-carboxylate + L-aspartate + ATP = (2S)-2-[5-amino-1-(5-phospho-beta-D-ribosyl)imidazole-4-carboxamido]succinate + ADP + phosphate + 2 H(+)</text>
        <dbReference type="Rhea" id="RHEA:22628"/>
        <dbReference type="ChEBI" id="CHEBI:15378"/>
        <dbReference type="ChEBI" id="CHEBI:29991"/>
        <dbReference type="ChEBI" id="CHEBI:30616"/>
        <dbReference type="ChEBI" id="CHEBI:43474"/>
        <dbReference type="ChEBI" id="CHEBI:58443"/>
        <dbReference type="ChEBI" id="CHEBI:77657"/>
        <dbReference type="ChEBI" id="CHEBI:456216"/>
        <dbReference type="EC" id="6.3.2.6"/>
    </reaction>
</comment>
<comment type="pathway">
    <text evidence="1">Purine metabolism; IMP biosynthesis via de novo pathway; 5-amino-1-(5-phospho-D-ribosyl)imidazole-4-carboxamide from 5-amino-1-(5-phospho-D-ribosyl)imidazole-4-carboxylate: step 1/2.</text>
</comment>
<comment type="similarity">
    <text evidence="1">Belongs to the SAICAR synthetase family.</text>
</comment>
<organism>
    <name type="scientific">Clostridium botulinum (strain Kyoto / Type A2)</name>
    <dbReference type="NCBI Taxonomy" id="536232"/>
    <lineage>
        <taxon>Bacteria</taxon>
        <taxon>Bacillati</taxon>
        <taxon>Bacillota</taxon>
        <taxon>Clostridia</taxon>
        <taxon>Eubacteriales</taxon>
        <taxon>Clostridiaceae</taxon>
        <taxon>Clostridium</taxon>
    </lineage>
</organism>
<reference key="1">
    <citation type="submission" date="2008-10" db="EMBL/GenBank/DDBJ databases">
        <title>Genome sequence of Clostridium botulinum A2 Kyoto.</title>
        <authorList>
            <person name="Shrivastava S."/>
            <person name="Brinkac L.M."/>
            <person name="Brown J.L."/>
            <person name="Bruce D."/>
            <person name="Detter C.C."/>
            <person name="Johnson E.A."/>
            <person name="Munk C.A."/>
            <person name="Smith L.A."/>
            <person name="Smith T.J."/>
            <person name="Sutton G."/>
            <person name="Brettin T.S."/>
        </authorList>
    </citation>
    <scope>NUCLEOTIDE SEQUENCE [LARGE SCALE GENOMIC DNA]</scope>
    <source>
        <strain>Kyoto / Type A2</strain>
    </source>
</reference>
<name>PUR7_CLOBJ</name>
<evidence type="ECO:0000255" key="1">
    <source>
        <dbReference type="HAMAP-Rule" id="MF_00137"/>
    </source>
</evidence>
<feature type="chain" id="PRO_1000122909" description="Phosphoribosylaminoimidazole-succinocarboxamide synthase">
    <location>
        <begin position="1"/>
        <end position="234"/>
    </location>
</feature>
<protein>
    <recommendedName>
        <fullName evidence="1">Phosphoribosylaminoimidazole-succinocarboxamide synthase</fullName>
        <ecNumber evidence="1">6.3.2.6</ecNumber>
    </recommendedName>
    <alternativeName>
        <fullName evidence="1">SAICAR synthetase</fullName>
    </alternativeName>
</protein>
<accession>C1FV80</accession>
<gene>
    <name evidence="1" type="primary">purC</name>
    <name type="ordered locus">CLM_3274</name>
</gene>